<accession>P71089</accession>
<accession>Q796Y6</accession>
<evidence type="ECO:0000250" key="1"/>
<evidence type="ECO:0000305" key="2"/>
<reference key="1">
    <citation type="journal article" date="1997" name="Microbiology">
        <title>The Bacillus subtilis 168 chromosome from sspE to katA.</title>
        <authorList>
            <person name="Cummings N.J."/>
            <person name="Connerton I.F."/>
        </authorList>
    </citation>
    <scope>NUCLEOTIDE SEQUENCE [GENOMIC DNA]</scope>
    <source>
        <strain>168</strain>
    </source>
</reference>
<reference key="2">
    <citation type="journal article" date="1997" name="Nature">
        <title>The complete genome sequence of the Gram-positive bacterium Bacillus subtilis.</title>
        <authorList>
            <person name="Kunst F."/>
            <person name="Ogasawara N."/>
            <person name="Moszer I."/>
            <person name="Albertini A.M."/>
            <person name="Alloni G."/>
            <person name="Azevedo V."/>
            <person name="Bertero M.G."/>
            <person name="Bessieres P."/>
            <person name="Bolotin A."/>
            <person name="Borchert S."/>
            <person name="Borriss R."/>
            <person name="Boursier L."/>
            <person name="Brans A."/>
            <person name="Braun M."/>
            <person name="Brignell S.C."/>
            <person name="Bron S."/>
            <person name="Brouillet S."/>
            <person name="Bruschi C.V."/>
            <person name="Caldwell B."/>
            <person name="Capuano V."/>
            <person name="Carter N.M."/>
            <person name="Choi S.-K."/>
            <person name="Codani J.-J."/>
            <person name="Connerton I.F."/>
            <person name="Cummings N.J."/>
            <person name="Daniel R.A."/>
            <person name="Denizot F."/>
            <person name="Devine K.M."/>
            <person name="Duesterhoeft A."/>
            <person name="Ehrlich S.D."/>
            <person name="Emmerson P.T."/>
            <person name="Entian K.-D."/>
            <person name="Errington J."/>
            <person name="Fabret C."/>
            <person name="Ferrari E."/>
            <person name="Foulger D."/>
            <person name="Fritz C."/>
            <person name="Fujita M."/>
            <person name="Fujita Y."/>
            <person name="Fuma S."/>
            <person name="Galizzi A."/>
            <person name="Galleron N."/>
            <person name="Ghim S.-Y."/>
            <person name="Glaser P."/>
            <person name="Goffeau A."/>
            <person name="Golightly E.J."/>
            <person name="Grandi G."/>
            <person name="Guiseppi G."/>
            <person name="Guy B.J."/>
            <person name="Haga K."/>
            <person name="Haiech J."/>
            <person name="Harwood C.R."/>
            <person name="Henaut A."/>
            <person name="Hilbert H."/>
            <person name="Holsappel S."/>
            <person name="Hosono S."/>
            <person name="Hullo M.-F."/>
            <person name="Itaya M."/>
            <person name="Jones L.-M."/>
            <person name="Joris B."/>
            <person name="Karamata D."/>
            <person name="Kasahara Y."/>
            <person name="Klaerr-Blanchard M."/>
            <person name="Klein C."/>
            <person name="Kobayashi Y."/>
            <person name="Koetter P."/>
            <person name="Koningstein G."/>
            <person name="Krogh S."/>
            <person name="Kumano M."/>
            <person name="Kurita K."/>
            <person name="Lapidus A."/>
            <person name="Lardinois S."/>
            <person name="Lauber J."/>
            <person name="Lazarevic V."/>
            <person name="Lee S.-M."/>
            <person name="Levine A."/>
            <person name="Liu H."/>
            <person name="Masuda S."/>
            <person name="Mauel C."/>
            <person name="Medigue C."/>
            <person name="Medina N."/>
            <person name="Mellado R.P."/>
            <person name="Mizuno M."/>
            <person name="Moestl D."/>
            <person name="Nakai S."/>
            <person name="Noback M."/>
            <person name="Noone D."/>
            <person name="O'Reilly M."/>
            <person name="Ogawa K."/>
            <person name="Ogiwara A."/>
            <person name="Oudega B."/>
            <person name="Park S.-H."/>
            <person name="Parro V."/>
            <person name="Pohl T.M."/>
            <person name="Portetelle D."/>
            <person name="Porwollik S."/>
            <person name="Prescott A.M."/>
            <person name="Presecan E."/>
            <person name="Pujic P."/>
            <person name="Purnelle B."/>
            <person name="Rapoport G."/>
            <person name="Rey M."/>
            <person name="Reynolds S."/>
            <person name="Rieger M."/>
            <person name="Rivolta C."/>
            <person name="Rocha E."/>
            <person name="Roche B."/>
            <person name="Rose M."/>
            <person name="Sadaie Y."/>
            <person name="Sato T."/>
            <person name="Scanlan E."/>
            <person name="Schleich S."/>
            <person name="Schroeter R."/>
            <person name="Scoffone F."/>
            <person name="Sekiguchi J."/>
            <person name="Sekowska A."/>
            <person name="Seror S.J."/>
            <person name="Serror P."/>
            <person name="Shin B.-S."/>
            <person name="Soldo B."/>
            <person name="Sorokin A."/>
            <person name="Tacconi E."/>
            <person name="Takagi T."/>
            <person name="Takahashi H."/>
            <person name="Takemaru K."/>
            <person name="Takeuchi M."/>
            <person name="Tamakoshi A."/>
            <person name="Tanaka T."/>
            <person name="Terpstra P."/>
            <person name="Tognoni A."/>
            <person name="Tosato V."/>
            <person name="Uchiyama S."/>
            <person name="Vandenbol M."/>
            <person name="Vannier F."/>
            <person name="Vassarotti A."/>
            <person name="Viari A."/>
            <person name="Wambutt R."/>
            <person name="Wedler E."/>
            <person name="Wedler H."/>
            <person name="Weitzenegger T."/>
            <person name="Winters P."/>
            <person name="Wipat A."/>
            <person name="Yamamoto H."/>
            <person name="Yamane K."/>
            <person name="Yasumoto K."/>
            <person name="Yata K."/>
            <person name="Yoshida K."/>
            <person name="Yoshikawa H.-F."/>
            <person name="Zumstein E."/>
            <person name="Yoshikawa H."/>
            <person name="Danchin A."/>
        </authorList>
    </citation>
    <scope>NUCLEOTIDE SEQUENCE [LARGE SCALE GENOMIC DNA]</scope>
    <source>
        <strain>168</strain>
    </source>
</reference>
<reference key="3">
    <citation type="journal article" date="2009" name="Microbiology">
        <title>From a consortium sequence to a unified sequence: the Bacillus subtilis 168 reference genome a decade later.</title>
        <authorList>
            <person name="Barbe V."/>
            <person name="Cruveiller S."/>
            <person name="Kunst F."/>
            <person name="Lenoble P."/>
            <person name="Meurice G."/>
            <person name="Sekowska A."/>
            <person name="Vallenet D."/>
            <person name="Wang T."/>
            <person name="Moszer I."/>
            <person name="Medigue C."/>
            <person name="Danchin A."/>
        </authorList>
    </citation>
    <scope>SEQUENCE REVISION</scope>
</reference>
<sequence length="230" mass="25503">MKQIIAMGGGGFSMEPDNLSLDQYILNQSKREQPRICFLPTASGDSQNYIQRFYHAFQTLDCVPSHLSLFKPPSSDLVSFVMEMDVIYVGGGNTRNLLVLWKEWGLDHILREAWKNGVVVAGISAGAICWFEEGVTDSAGPLTSLKSLGFLQGSFCPHYDGEKDRRPAYHQLISNKFLCSGYAADDGAALHFINDQLFQTVSSRSGAKAYRVMMAEHEIAEIPLPVKYLG</sequence>
<name>YGAJ_BACSU</name>
<proteinExistence type="inferred from homology"/>
<gene>
    <name type="primary">ygaJ</name>
    <name type="ordered locus">BSU08780</name>
</gene>
<feature type="chain" id="PRO_0000360163" description="Uncharacterized peptidase YgaJ">
    <location>
        <begin position="1"/>
        <end position="230"/>
    </location>
</feature>
<feature type="active site" description="Charge relay system" evidence="1">
    <location>
        <position position="124"/>
    </location>
</feature>
<feature type="active site" description="Charge relay system" evidence="1">
    <location>
        <position position="158"/>
    </location>
</feature>
<feature type="sequence conflict" description="In Ref. 1; CAB04804." evidence="2" ref="1">
    <original>G</original>
    <variation>A</variation>
    <location>
        <position position="8"/>
    </location>
</feature>
<feature type="sequence conflict" description="In Ref. 1; CAB04804." evidence="2" ref="1">
    <original>P</original>
    <variation>H</variation>
    <location>
        <position position="34"/>
    </location>
</feature>
<feature type="sequence conflict" description="In Ref. 1; CAB04804." evidence="2" ref="1">
    <original>LG</original>
    <variation>VRVKLAEYYLYSSFFQIDFMIR</variation>
    <location>
        <begin position="229"/>
        <end position="230"/>
    </location>
</feature>
<protein>
    <recommendedName>
        <fullName>Uncharacterized peptidase YgaJ</fullName>
        <ecNumber>3.4.21.-</ecNumber>
    </recommendedName>
</protein>
<dbReference type="EC" id="3.4.21.-"/>
<dbReference type="EMBL" id="Z82044">
    <property type="protein sequence ID" value="CAB04804.1"/>
    <property type="status" value="ALT_INIT"/>
    <property type="molecule type" value="Genomic_DNA"/>
</dbReference>
<dbReference type="EMBL" id="AL009126">
    <property type="protein sequence ID" value="CAB12706.2"/>
    <property type="molecule type" value="Genomic_DNA"/>
</dbReference>
<dbReference type="PIR" id="E69816">
    <property type="entry name" value="E69816"/>
</dbReference>
<dbReference type="RefSeq" id="NP_388758.2">
    <property type="nucleotide sequence ID" value="NC_000964.3"/>
</dbReference>
<dbReference type="RefSeq" id="WP_003245002.1">
    <property type="nucleotide sequence ID" value="NZ_OZ025638.1"/>
</dbReference>
<dbReference type="SMR" id="P71089"/>
<dbReference type="FunCoup" id="P71089">
    <property type="interactions" value="43"/>
</dbReference>
<dbReference type="STRING" id="224308.BSU08780"/>
<dbReference type="PaxDb" id="224308-BSU08780"/>
<dbReference type="EnsemblBacteria" id="CAB12706">
    <property type="protein sequence ID" value="CAB12706"/>
    <property type="gene ID" value="BSU_08780"/>
</dbReference>
<dbReference type="GeneID" id="939241"/>
<dbReference type="KEGG" id="bsu:BSU08780"/>
<dbReference type="PATRIC" id="fig|224308.179.peg.948"/>
<dbReference type="eggNOG" id="COG3340">
    <property type="taxonomic scope" value="Bacteria"/>
</dbReference>
<dbReference type="InParanoid" id="P71089"/>
<dbReference type="OrthoDB" id="9778515at2"/>
<dbReference type="PhylomeDB" id="P71089"/>
<dbReference type="BioCyc" id="BSUB:BSU08780-MONOMER"/>
<dbReference type="Proteomes" id="UP000001570">
    <property type="component" value="Chromosome"/>
</dbReference>
<dbReference type="GO" id="GO:0008236">
    <property type="term" value="F:serine-type peptidase activity"/>
    <property type="evidence" value="ECO:0007669"/>
    <property type="project" value="UniProtKB-KW"/>
</dbReference>
<dbReference type="GO" id="GO:0006508">
    <property type="term" value="P:proteolysis"/>
    <property type="evidence" value="ECO:0007669"/>
    <property type="project" value="UniProtKB-KW"/>
</dbReference>
<dbReference type="CDD" id="cd03146">
    <property type="entry name" value="GAT1_Peptidase_E"/>
    <property type="match status" value="1"/>
</dbReference>
<dbReference type="Gene3D" id="3.40.50.880">
    <property type="match status" value="1"/>
</dbReference>
<dbReference type="InterPro" id="IPR029062">
    <property type="entry name" value="Class_I_gatase-like"/>
</dbReference>
<dbReference type="InterPro" id="IPR005320">
    <property type="entry name" value="Peptidase_S51"/>
</dbReference>
<dbReference type="PANTHER" id="PTHR20842:SF0">
    <property type="entry name" value="ALPHA-ASPARTYL DIPEPTIDASE"/>
    <property type="match status" value="1"/>
</dbReference>
<dbReference type="PANTHER" id="PTHR20842">
    <property type="entry name" value="PROTEASE S51 ALPHA-ASPARTYL DIPEPTIDASE"/>
    <property type="match status" value="1"/>
</dbReference>
<dbReference type="Pfam" id="PF03575">
    <property type="entry name" value="Peptidase_S51"/>
    <property type="match status" value="1"/>
</dbReference>
<dbReference type="SUPFAM" id="SSF52317">
    <property type="entry name" value="Class I glutamine amidotransferase-like"/>
    <property type="match status" value="1"/>
</dbReference>
<organism>
    <name type="scientific">Bacillus subtilis (strain 168)</name>
    <dbReference type="NCBI Taxonomy" id="224308"/>
    <lineage>
        <taxon>Bacteria</taxon>
        <taxon>Bacillati</taxon>
        <taxon>Bacillota</taxon>
        <taxon>Bacilli</taxon>
        <taxon>Bacillales</taxon>
        <taxon>Bacillaceae</taxon>
        <taxon>Bacillus</taxon>
    </lineage>
</organism>
<keyword id="KW-0378">Hydrolase</keyword>
<keyword id="KW-0645">Protease</keyword>
<keyword id="KW-1185">Reference proteome</keyword>
<keyword id="KW-0720">Serine protease</keyword>
<comment type="similarity">
    <text evidence="2">Belongs to the peptidase S51 family.</text>
</comment>
<comment type="sequence caution" evidence="2">
    <conflict type="erroneous initiation">
        <sequence resource="EMBL-CDS" id="CAB04804"/>
    </conflict>
</comment>